<dbReference type="EMBL" id="AM920689">
    <property type="protein sequence ID" value="CAP53732.1"/>
    <property type="molecule type" value="Genomic_DNA"/>
</dbReference>
<dbReference type="SMR" id="B0RZ46"/>
<dbReference type="KEGG" id="xca:xcc-b100_4362"/>
<dbReference type="HOGENOM" id="CLU_023403_2_0_6"/>
<dbReference type="UniPathway" id="UPA00637"/>
<dbReference type="Proteomes" id="UP000001188">
    <property type="component" value="Chromosome"/>
</dbReference>
<dbReference type="GO" id="GO:0030288">
    <property type="term" value="C:outer membrane-bounded periplasmic space"/>
    <property type="evidence" value="ECO:0007669"/>
    <property type="project" value="TreeGrafter"/>
</dbReference>
<dbReference type="GO" id="GO:0030246">
    <property type="term" value="F:carbohydrate binding"/>
    <property type="evidence" value="ECO:0007669"/>
    <property type="project" value="InterPro"/>
</dbReference>
<dbReference type="GO" id="GO:0003824">
    <property type="term" value="F:catalytic activity"/>
    <property type="evidence" value="ECO:0007669"/>
    <property type="project" value="InterPro"/>
</dbReference>
<dbReference type="GO" id="GO:0051274">
    <property type="term" value="P:beta-glucan biosynthetic process"/>
    <property type="evidence" value="ECO:0007669"/>
    <property type="project" value="TreeGrafter"/>
</dbReference>
<dbReference type="FunFam" id="2.60.40.10:FF:002063">
    <property type="entry name" value="Glucans biosynthesis protein D"/>
    <property type="match status" value="1"/>
</dbReference>
<dbReference type="FunFam" id="2.70.98.10:FF:000001">
    <property type="entry name" value="Glucans biosynthesis protein G"/>
    <property type="match status" value="1"/>
</dbReference>
<dbReference type="Gene3D" id="2.70.98.10">
    <property type="match status" value="1"/>
</dbReference>
<dbReference type="Gene3D" id="2.60.40.10">
    <property type="entry name" value="Immunoglobulins"/>
    <property type="match status" value="1"/>
</dbReference>
<dbReference type="HAMAP" id="MF_01068">
    <property type="entry name" value="MdoD_OpgD"/>
    <property type="match status" value="1"/>
</dbReference>
<dbReference type="InterPro" id="IPR011013">
    <property type="entry name" value="Gal_mutarotase_sf_dom"/>
</dbReference>
<dbReference type="InterPro" id="IPR014718">
    <property type="entry name" value="GH-type_carb-bd"/>
</dbReference>
<dbReference type="InterPro" id="IPR023724">
    <property type="entry name" value="Glucan_biosyn_MdoD"/>
</dbReference>
<dbReference type="InterPro" id="IPR014438">
    <property type="entry name" value="Glucan_biosyn_MdoG/MdoD"/>
</dbReference>
<dbReference type="InterPro" id="IPR007444">
    <property type="entry name" value="Glucan_biosyn_MdoG_C"/>
</dbReference>
<dbReference type="InterPro" id="IPR013783">
    <property type="entry name" value="Ig-like_fold"/>
</dbReference>
<dbReference type="InterPro" id="IPR014756">
    <property type="entry name" value="Ig_E-set"/>
</dbReference>
<dbReference type="InterPro" id="IPR006311">
    <property type="entry name" value="TAT_signal"/>
</dbReference>
<dbReference type="PANTHER" id="PTHR30504">
    <property type="entry name" value="GLUCANS BIOSYNTHESIS PROTEIN"/>
    <property type="match status" value="1"/>
</dbReference>
<dbReference type="PANTHER" id="PTHR30504:SF3">
    <property type="entry name" value="GLUCANS BIOSYNTHESIS PROTEIN D"/>
    <property type="match status" value="1"/>
</dbReference>
<dbReference type="Pfam" id="PF04349">
    <property type="entry name" value="MdoG"/>
    <property type="match status" value="1"/>
</dbReference>
<dbReference type="PIRSF" id="PIRSF006281">
    <property type="entry name" value="MdoG"/>
    <property type="match status" value="1"/>
</dbReference>
<dbReference type="SUPFAM" id="SSF81296">
    <property type="entry name" value="E set domains"/>
    <property type="match status" value="1"/>
</dbReference>
<dbReference type="SUPFAM" id="SSF74650">
    <property type="entry name" value="Galactose mutarotase-like"/>
    <property type="match status" value="1"/>
</dbReference>
<dbReference type="PROSITE" id="PS51318">
    <property type="entry name" value="TAT"/>
    <property type="match status" value="1"/>
</dbReference>
<accession>B0RZ46</accession>
<protein>
    <recommendedName>
        <fullName evidence="1">Glucans biosynthesis protein D</fullName>
    </recommendedName>
</protein>
<name>OPGD_XANCB</name>
<organism>
    <name type="scientific">Xanthomonas campestris pv. campestris (strain B100)</name>
    <dbReference type="NCBI Taxonomy" id="509169"/>
    <lineage>
        <taxon>Bacteria</taxon>
        <taxon>Pseudomonadati</taxon>
        <taxon>Pseudomonadota</taxon>
        <taxon>Gammaproteobacteria</taxon>
        <taxon>Lysobacterales</taxon>
        <taxon>Lysobacteraceae</taxon>
        <taxon>Xanthomonas</taxon>
    </lineage>
</organism>
<evidence type="ECO:0000255" key="1">
    <source>
        <dbReference type="HAMAP-Rule" id="MF_01068"/>
    </source>
</evidence>
<comment type="function">
    <text evidence="1">Probably involved in the control of the structural glucose backbone of osmoregulated periplasmic glucans (OPGs).</text>
</comment>
<comment type="pathway">
    <text evidence="1">Glycan metabolism; osmoregulated periplasmic glucan (OPG) biosynthesis.</text>
</comment>
<comment type="subcellular location">
    <subcellularLocation>
        <location evidence="1">Periplasm</location>
    </subcellularLocation>
</comment>
<comment type="PTM">
    <text>Predicted to be exported by the Tat system. The position of the signal peptide cleavage has not been experimentally proven.</text>
</comment>
<comment type="similarity">
    <text evidence="1">Belongs to the OpgD/OpgG family.</text>
</comment>
<sequence length="533" mass="59789">MQRRHFLKNAAAALAALGLPALPPWALAAKAVGLRRLGQPQPFDYAWLKGQARALAKAPYKSHKQVLPGPLESLNWDQYQSIRYRQDHALWADGNGKFQAKFFHLGLYFHTPVHIYDIVDGKAQQLAYDPAAFDYGRSGLGGKQLPKDLGFAGFRLNTRKDTDRDFSAFLGASYFRAVGKEGQYGQSARGLAIDTGTGGPEEFPDFIAYYLEQPADDSDTVVVYGLLDSPSVSGAYRFAITNGEVLVMDIDSALYPRKAIERLGIGPCTSMYQTGENDRRMDWDWRPEIHDTDGLAMWTGGGEWIWRPLCNPPHLRFNMFVDENPRGFGLLQRDRNFDHYQDDGVFYEKRPCLWVEPKSGWGKGSVQLVEIPTVDETFDNIVAFWNPQAKPQPGQELLMGYRLYWGAHPPASSPLAHCMATRTGLGGIVGQKRSHFSWRFAVDFAGGELAALAKDPKAKVEAVLQVSRGTTEIVSARPLHELKGYRAMFDLVPPDEGTQQIDIRLFLRANGKPLTETWLYQWTPPPASERKIY</sequence>
<proteinExistence type="inferred from homology"/>
<keyword id="KW-0574">Periplasm</keyword>
<keyword id="KW-0732">Signal</keyword>
<reference key="1">
    <citation type="journal article" date="2008" name="J. Biotechnol.">
        <title>The genome of Xanthomonas campestris pv. campestris B100 and its use for the reconstruction of metabolic pathways involved in xanthan biosynthesis.</title>
        <authorList>
            <person name="Vorhoelter F.-J."/>
            <person name="Schneiker S."/>
            <person name="Goesmann A."/>
            <person name="Krause L."/>
            <person name="Bekel T."/>
            <person name="Kaiser O."/>
            <person name="Linke B."/>
            <person name="Patschkowski T."/>
            <person name="Rueckert C."/>
            <person name="Schmid J."/>
            <person name="Sidhu V.K."/>
            <person name="Sieber V."/>
            <person name="Tauch A."/>
            <person name="Watt S.A."/>
            <person name="Weisshaar B."/>
            <person name="Becker A."/>
            <person name="Niehaus K."/>
            <person name="Puehler A."/>
        </authorList>
    </citation>
    <scope>NUCLEOTIDE SEQUENCE [LARGE SCALE GENOMIC DNA]</scope>
    <source>
        <strain>B100</strain>
    </source>
</reference>
<gene>
    <name evidence="1" type="primary">opgD</name>
    <name type="ordered locus">xcc-b100_4362</name>
</gene>
<feature type="signal peptide" description="Tat-type signal" evidence="1">
    <location>
        <begin position="1"/>
        <end position="28"/>
    </location>
</feature>
<feature type="chain" id="PRO_1000136604" description="Glucans biosynthesis protein D">
    <location>
        <begin position="29"/>
        <end position="533"/>
    </location>
</feature>